<organism>
    <name type="scientific">Drosophila pseudoobscura pseudoobscura</name>
    <name type="common">Fruit fly</name>
    <dbReference type="NCBI Taxonomy" id="46245"/>
    <lineage>
        <taxon>Eukaryota</taxon>
        <taxon>Metazoa</taxon>
        <taxon>Ecdysozoa</taxon>
        <taxon>Arthropoda</taxon>
        <taxon>Hexapoda</taxon>
        <taxon>Insecta</taxon>
        <taxon>Pterygota</taxon>
        <taxon>Neoptera</taxon>
        <taxon>Endopterygota</taxon>
        <taxon>Diptera</taxon>
        <taxon>Brachycera</taxon>
        <taxon>Muscomorpha</taxon>
        <taxon>Ephydroidea</taxon>
        <taxon>Drosophilidae</taxon>
        <taxon>Drosophila</taxon>
        <taxon>Sophophora</taxon>
    </lineage>
</organism>
<sequence>MSLQSIKYTRGSLEILDQLLLPVQSKYLPVRGVEDGWKVINKMQVRGAPAIAIVGCLSLAVEIHPEEFDSKKSLRQELEGKLNYLVSARPTAVNMKMAADELLSLANDLTKDDNVDVAAMKQRFLNATEAMLKKDIADNRAIGAHGAKAILQLVAAAAGAPMAGPVRVLTHCNTGSLATAGYGTALGVVRQLSELGKLEHVYCTETRPYNQGARLTAYELVHEKFPATLVLDSMVAALLRAKNVAAVVVGADRVAANGDTANKIGTYQIAVVAKHHGVPFFVAAPLTSIDLHIPSGDHIIIEERPDREMTHVGEHRIAAPGINCWNPAFDVTPASLITGIITERGVFQPAQLKETITKLLET</sequence>
<keyword id="KW-0028">Amino-acid biosynthesis</keyword>
<keyword id="KW-0963">Cytoplasm</keyword>
<keyword id="KW-0413">Isomerase</keyword>
<keyword id="KW-0486">Methionine biosynthesis</keyword>
<keyword id="KW-0539">Nucleus</keyword>
<keyword id="KW-1185">Reference proteome</keyword>
<accession>Q29BB3</accession>
<dbReference type="EC" id="5.3.1.23" evidence="1"/>
<dbReference type="EMBL" id="CM000070">
    <property type="protein sequence ID" value="EAL27085.1"/>
    <property type="molecule type" value="Genomic_DNA"/>
</dbReference>
<dbReference type="RefSeq" id="XP_001357949.1">
    <property type="nucleotide sequence ID" value="XM_001357912.3"/>
</dbReference>
<dbReference type="RefSeq" id="XP_015038496.1">
    <property type="nucleotide sequence ID" value="XM_015183010.1"/>
</dbReference>
<dbReference type="SMR" id="Q29BB3"/>
<dbReference type="FunCoup" id="Q29BB3">
    <property type="interactions" value="1645"/>
</dbReference>
<dbReference type="STRING" id="46245.Q29BB3"/>
<dbReference type="EnsemblMetazoa" id="FBtr0284247">
    <property type="protein sequence ID" value="FBpp0282685"/>
    <property type="gene ID" value="FBgn0070984"/>
</dbReference>
<dbReference type="EnsemblMetazoa" id="FBtr0378110">
    <property type="protein sequence ID" value="FBpp0338989"/>
    <property type="gene ID" value="FBgn0070984"/>
</dbReference>
<dbReference type="KEGG" id="dpo:4800729"/>
<dbReference type="eggNOG" id="KOG1468">
    <property type="taxonomic scope" value="Eukaryota"/>
</dbReference>
<dbReference type="HOGENOM" id="CLU_016218_1_3_1"/>
<dbReference type="InParanoid" id="Q29BB3"/>
<dbReference type="OMA" id="CETRPLN"/>
<dbReference type="PhylomeDB" id="Q29BB3"/>
<dbReference type="UniPathway" id="UPA00904">
    <property type="reaction ID" value="UER00874"/>
</dbReference>
<dbReference type="Proteomes" id="UP000001819">
    <property type="component" value="Chromosome 2"/>
</dbReference>
<dbReference type="Bgee" id="FBgn0070984">
    <property type="expression patterns" value="Expressed in female reproductive system and 3 other cell types or tissues"/>
</dbReference>
<dbReference type="ExpressionAtlas" id="Q29BB3">
    <property type="expression patterns" value="baseline"/>
</dbReference>
<dbReference type="GO" id="GO:0005737">
    <property type="term" value="C:cytoplasm"/>
    <property type="evidence" value="ECO:0007669"/>
    <property type="project" value="UniProtKB-SubCell"/>
</dbReference>
<dbReference type="GO" id="GO:0005634">
    <property type="term" value="C:nucleus"/>
    <property type="evidence" value="ECO:0007669"/>
    <property type="project" value="UniProtKB-SubCell"/>
</dbReference>
<dbReference type="GO" id="GO:0046523">
    <property type="term" value="F:S-methyl-5-thioribose-1-phosphate isomerase activity"/>
    <property type="evidence" value="ECO:0007669"/>
    <property type="project" value="UniProtKB-UniRule"/>
</dbReference>
<dbReference type="GO" id="GO:0019509">
    <property type="term" value="P:L-methionine salvage from methylthioadenosine"/>
    <property type="evidence" value="ECO:0007669"/>
    <property type="project" value="UniProtKB-UniRule"/>
</dbReference>
<dbReference type="FunFam" id="1.20.120.420:FF:000010">
    <property type="entry name" value="Methylthioribose-1-phosphate isomerase"/>
    <property type="match status" value="1"/>
</dbReference>
<dbReference type="FunFam" id="3.40.50.10470:FF:000003">
    <property type="entry name" value="Methylthioribose-1-phosphate isomerase"/>
    <property type="match status" value="1"/>
</dbReference>
<dbReference type="Gene3D" id="1.20.120.420">
    <property type="entry name" value="translation initiation factor eif-2b, domain 1"/>
    <property type="match status" value="1"/>
</dbReference>
<dbReference type="Gene3D" id="3.40.50.10470">
    <property type="entry name" value="Translation initiation factor eif-2b, domain 2"/>
    <property type="match status" value="1"/>
</dbReference>
<dbReference type="HAMAP" id="MF_01678">
    <property type="entry name" value="Salvage_MtnA"/>
    <property type="match status" value="1"/>
</dbReference>
<dbReference type="InterPro" id="IPR000649">
    <property type="entry name" value="IF-2B-related"/>
</dbReference>
<dbReference type="InterPro" id="IPR005251">
    <property type="entry name" value="IF-M1Pi"/>
</dbReference>
<dbReference type="InterPro" id="IPR042529">
    <property type="entry name" value="IF_2B-like_C"/>
</dbReference>
<dbReference type="InterPro" id="IPR011559">
    <property type="entry name" value="Initiation_fac_2B_a/b/d"/>
</dbReference>
<dbReference type="InterPro" id="IPR027363">
    <property type="entry name" value="M1Pi_N"/>
</dbReference>
<dbReference type="InterPro" id="IPR037171">
    <property type="entry name" value="NagB/RpiA_transferase-like"/>
</dbReference>
<dbReference type="NCBIfam" id="TIGR00524">
    <property type="entry name" value="eIF-2B_rel"/>
    <property type="match status" value="1"/>
</dbReference>
<dbReference type="NCBIfam" id="NF004326">
    <property type="entry name" value="PRK05720.1"/>
    <property type="match status" value="1"/>
</dbReference>
<dbReference type="NCBIfam" id="TIGR00512">
    <property type="entry name" value="salvage_mtnA"/>
    <property type="match status" value="1"/>
</dbReference>
<dbReference type="PANTHER" id="PTHR43475">
    <property type="entry name" value="METHYLTHIORIBOSE-1-PHOSPHATE ISOMERASE"/>
    <property type="match status" value="1"/>
</dbReference>
<dbReference type="PANTHER" id="PTHR43475:SF1">
    <property type="entry name" value="METHYLTHIORIBOSE-1-PHOSPHATE ISOMERASE"/>
    <property type="match status" value="1"/>
</dbReference>
<dbReference type="Pfam" id="PF01008">
    <property type="entry name" value="IF-2B"/>
    <property type="match status" value="1"/>
</dbReference>
<dbReference type="SUPFAM" id="SSF100950">
    <property type="entry name" value="NagB/RpiA/CoA transferase-like"/>
    <property type="match status" value="1"/>
</dbReference>
<comment type="function">
    <text evidence="1">Catalyzes the interconversion of methylthioribose-1-phosphate (MTR-1-P) into methylthioribulose-1-phosphate (MTRu-1-P).</text>
</comment>
<comment type="catalytic activity">
    <reaction evidence="1">
        <text>5-(methylsulfanyl)-alpha-D-ribose 1-phosphate = 5-(methylsulfanyl)-D-ribulose 1-phosphate</text>
        <dbReference type="Rhea" id="RHEA:19989"/>
        <dbReference type="ChEBI" id="CHEBI:58533"/>
        <dbReference type="ChEBI" id="CHEBI:58548"/>
        <dbReference type="EC" id="5.3.1.23"/>
    </reaction>
</comment>
<comment type="pathway">
    <text evidence="1">Amino-acid biosynthesis; L-methionine biosynthesis via salvage pathway; L-methionine from S-methyl-5-thio-alpha-D-ribose 1-phosphate: step 1/6.</text>
</comment>
<comment type="subcellular location">
    <subcellularLocation>
        <location evidence="1">Cytoplasm</location>
    </subcellularLocation>
    <subcellularLocation>
        <location evidence="1">Nucleus</location>
    </subcellularLocation>
</comment>
<comment type="similarity">
    <text evidence="1">Belongs to the eIF-2B alpha/beta/delta subunits family. MtnA subfamily.</text>
</comment>
<protein>
    <recommendedName>
        <fullName evidence="1">Methylthioribose-1-phosphate isomerase</fullName>
        <shortName evidence="1">M1Pi</shortName>
        <shortName evidence="1">MTR-1-P isomerase</shortName>
        <ecNumber evidence="1">5.3.1.23</ecNumber>
    </recommendedName>
    <alternativeName>
        <fullName evidence="1">S-methyl-5-thioribose-1-phosphate isomerase</fullName>
    </alternativeName>
    <alternativeName>
        <fullName evidence="1">Translation initiation factor eIF-2B subunit alpha/beta/delta-like protein</fullName>
    </alternativeName>
</protein>
<gene>
    <name type="ORF">GA10928</name>
</gene>
<evidence type="ECO:0000255" key="1">
    <source>
        <dbReference type="HAMAP-Rule" id="MF_03119"/>
    </source>
</evidence>
<feature type="chain" id="PRO_0000401981" description="Methylthioribose-1-phosphate isomerase">
    <location>
        <begin position="1"/>
        <end position="362"/>
    </location>
</feature>
<feature type="active site" description="Proton donor" evidence="1">
    <location>
        <position position="252"/>
    </location>
</feature>
<feature type="site" description="Transition state stabilizer" evidence="1">
    <location>
        <position position="172"/>
    </location>
</feature>
<reference key="1">
    <citation type="journal article" date="2005" name="Genome Res.">
        <title>Comparative genome sequencing of Drosophila pseudoobscura: chromosomal, gene, and cis-element evolution.</title>
        <authorList>
            <person name="Richards S."/>
            <person name="Liu Y."/>
            <person name="Bettencourt B.R."/>
            <person name="Hradecky P."/>
            <person name="Letovsky S."/>
            <person name="Nielsen R."/>
            <person name="Thornton K."/>
            <person name="Hubisz M.J."/>
            <person name="Chen R."/>
            <person name="Meisel R.P."/>
            <person name="Couronne O."/>
            <person name="Hua S."/>
            <person name="Smith M.A."/>
            <person name="Zhang P."/>
            <person name="Liu J."/>
            <person name="Bussemaker H.J."/>
            <person name="van Batenburg M.F."/>
            <person name="Howells S.L."/>
            <person name="Scherer S.E."/>
            <person name="Sodergren E."/>
            <person name="Matthews B.B."/>
            <person name="Crosby M.A."/>
            <person name="Schroeder A.J."/>
            <person name="Ortiz-Barrientos D."/>
            <person name="Rives C.M."/>
            <person name="Metzker M.L."/>
            <person name="Muzny D.M."/>
            <person name="Scott G."/>
            <person name="Steffen D."/>
            <person name="Wheeler D.A."/>
            <person name="Worley K.C."/>
            <person name="Havlak P."/>
            <person name="Durbin K.J."/>
            <person name="Egan A."/>
            <person name="Gill R."/>
            <person name="Hume J."/>
            <person name="Morgan M.B."/>
            <person name="Miner G."/>
            <person name="Hamilton C."/>
            <person name="Huang Y."/>
            <person name="Waldron L."/>
            <person name="Verduzco D."/>
            <person name="Clerc-Blankenburg K.P."/>
            <person name="Dubchak I."/>
            <person name="Noor M.A.F."/>
            <person name="Anderson W."/>
            <person name="White K.P."/>
            <person name="Clark A.G."/>
            <person name="Schaeffer S.W."/>
            <person name="Gelbart W.M."/>
            <person name="Weinstock G.M."/>
            <person name="Gibbs R.A."/>
        </authorList>
    </citation>
    <scope>NUCLEOTIDE SEQUENCE [LARGE SCALE GENOMIC DNA]</scope>
    <source>
        <strain>MV2-25 / Tucson 14011-0121.94</strain>
    </source>
</reference>
<proteinExistence type="inferred from homology"/>
<name>MTNA_DROPS</name>